<sequence>MESFSSKSLALQAEKKLLSKMAGRSVAHLFIDETSSEVLDELYRVSKEYTHSRPKAQRVIKDLIKVAVKVAVLHRSGCFGPGELALATRFRQKLRQGAMTALSFGEVDFTFEAAVLAGLLVECRDILLELVEHHLTPKSHDRIRHVFDHYSDPDLLAALYGPDFTQHLGKICDGLRKLLDEGKL</sequence>
<feature type="chain" id="PRO_0000285772" description="Tumor necrosis factor alpha-induced protein 8-like protein 2">
    <location>
        <begin position="1"/>
        <end position="184"/>
    </location>
</feature>
<feature type="modified residue" description="Phosphoserine" evidence="2">
    <location>
        <position position="3"/>
    </location>
</feature>
<protein>
    <recommendedName>
        <fullName>Tumor necrosis factor alpha-induced protein 8-like protein 2</fullName>
        <shortName>TIPE2</shortName>
        <shortName>TNF alpha-induced protein 8-like protein 2</shortName>
        <shortName>TNFAIP8-like protein 2</shortName>
    </recommendedName>
</protein>
<organism>
    <name type="scientific">Mus musculus</name>
    <name type="common">Mouse</name>
    <dbReference type="NCBI Taxonomy" id="10090"/>
    <lineage>
        <taxon>Eukaryota</taxon>
        <taxon>Metazoa</taxon>
        <taxon>Chordata</taxon>
        <taxon>Craniata</taxon>
        <taxon>Vertebrata</taxon>
        <taxon>Euteleostomi</taxon>
        <taxon>Mammalia</taxon>
        <taxon>Eutheria</taxon>
        <taxon>Euarchontoglires</taxon>
        <taxon>Glires</taxon>
        <taxon>Rodentia</taxon>
        <taxon>Myomorpha</taxon>
        <taxon>Muroidea</taxon>
        <taxon>Muridae</taxon>
        <taxon>Murinae</taxon>
        <taxon>Mus</taxon>
        <taxon>Mus</taxon>
    </lineage>
</organism>
<dbReference type="EMBL" id="AF548004">
    <property type="protein sequence ID" value="AAQ12263.1"/>
    <property type="molecule type" value="mRNA"/>
</dbReference>
<dbReference type="EMBL" id="AK007540">
    <property type="protein sequence ID" value="BAB25098.1"/>
    <property type="molecule type" value="mRNA"/>
</dbReference>
<dbReference type="EMBL" id="BC055879">
    <property type="protein sequence ID" value="AAH55879.1"/>
    <property type="molecule type" value="mRNA"/>
</dbReference>
<dbReference type="EMBL" id="BC094616">
    <property type="protein sequence ID" value="AAH94616.1"/>
    <property type="molecule type" value="mRNA"/>
</dbReference>
<dbReference type="CCDS" id="CCDS17603.1"/>
<dbReference type="RefSeq" id="NP_081482.1">
    <property type="nucleotide sequence ID" value="NM_027206.3"/>
</dbReference>
<dbReference type="RefSeq" id="XP_006502103.1">
    <property type="nucleotide sequence ID" value="XM_006502040.5"/>
</dbReference>
<dbReference type="SMR" id="Q9D8Y7"/>
<dbReference type="BioGRID" id="213666">
    <property type="interactions" value="2"/>
</dbReference>
<dbReference type="FunCoup" id="Q9D8Y7">
    <property type="interactions" value="468"/>
</dbReference>
<dbReference type="IntAct" id="Q9D8Y7">
    <property type="interactions" value="2"/>
</dbReference>
<dbReference type="STRING" id="10090.ENSMUSP00000013851"/>
<dbReference type="PhosphoSitePlus" id="Q9D8Y7"/>
<dbReference type="PaxDb" id="10090-ENSMUSP00000013851"/>
<dbReference type="PeptideAtlas" id="Q9D8Y7"/>
<dbReference type="ProteomicsDB" id="258960"/>
<dbReference type="Antibodypedia" id="34053">
    <property type="antibodies" value="156 antibodies from 26 providers"/>
</dbReference>
<dbReference type="DNASU" id="69769"/>
<dbReference type="Ensembl" id="ENSMUST00000013851.4">
    <property type="protein sequence ID" value="ENSMUSP00000013851.4"/>
    <property type="gene ID" value="ENSMUSG00000013707.4"/>
</dbReference>
<dbReference type="GeneID" id="69769"/>
<dbReference type="KEGG" id="mmu:69769"/>
<dbReference type="UCSC" id="uc008qif.1">
    <property type="organism name" value="mouse"/>
</dbReference>
<dbReference type="AGR" id="MGI:1917019"/>
<dbReference type="CTD" id="79626"/>
<dbReference type="MGI" id="MGI:1917019">
    <property type="gene designation" value="Tnfaip8l2"/>
</dbReference>
<dbReference type="VEuPathDB" id="HostDB:ENSMUSG00000013707"/>
<dbReference type="eggNOG" id="ENOG502QST4">
    <property type="taxonomic scope" value="Eukaryota"/>
</dbReference>
<dbReference type="GeneTree" id="ENSGT00390000003488"/>
<dbReference type="HOGENOM" id="CLU_085918_1_0_1"/>
<dbReference type="InParanoid" id="Q9D8Y7"/>
<dbReference type="OMA" id="IRRVFDH"/>
<dbReference type="OrthoDB" id="10055976at2759"/>
<dbReference type="PhylomeDB" id="Q9D8Y7"/>
<dbReference type="TreeFam" id="TF323415"/>
<dbReference type="Reactome" id="R-MMU-1483255">
    <property type="pathway name" value="PI Metabolism"/>
</dbReference>
<dbReference type="BioGRID-ORCS" id="69769">
    <property type="hits" value="1 hit in 78 CRISPR screens"/>
</dbReference>
<dbReference type="PRO" id="PR:Q9D8Y7"/>
<dbReference type="Proteomes" id="UP000000589">
    <property type="component" value="Chromosome 3"/>
</dbReference>
<dbReference type="RNAct" id="Q9D8Y7">
    <property type="molecule type" value="protein"/>
</dbReference>
<dbReference type="Bgee" id="ENSMUSG00000013707">
    <property type="expression patterns" value="Expressed in granulocyte and 113 other cell types or tissues"/>
</dbReference>
<dbReference type="GO" id="GO:0005737">
    <property type="term" value="C:cytoplasm"/>
    <property type="evidence" value="ECO:0000314"/>
    <property type="project" value="MGI"/>
</dbReference>
<dbReference type="GO" id="GO:0005764">
    <property type="term" value="C:lysosome"/>
    <property type="evidence" value="ECO:0007669"/>
    <property type="project" value="UniProtKB-SubCell"/>
</dbReference>
<dbReference type="GO" id="GO:0005634">
    <property type="term" value="C:nucleus"/>
    <property type="evidence" value="ECO:0007669"/>
    <property type="project" value="UniProtKB-SubCell"/>
</dbReference>
<dbReference type="GO" id="GO:0045087">
    <property type="term" value="P:innate immune response"/>
    <property type="evidence" value="ECO:0007669"/>
    <property type="project" value="UniProtKB-KW"/>
</dbReference>
<dbReference type="GO" id="GO:0050728">
    <property type="term" value="P:negative regulation of inflammatory response"/>
    <property type="evidence" value="ECO:0000315"/>
    <property type="project" value="MGI"/>
</dbReference>
<dbReference type="GO" id="GO:0050868">
    <property type="term" value="P:negative regulation of T cell activation"/>
    <property type="evidence" value="ECO:0000315"/>
    <property type="project" value="MGI"/>
</dbReference>
<dbReference type="GO" id="GO:0042981">
    <property type="term" value="P:regulation of apoptotic process"/>
    <property type="evidence" value="ECO:0007669"/>
    <property type="project" value="InterPro"/>
</dbReference>
<dbReference type="GO" id="GO:0042110">
    <property type="term" value="P:T cell activation"/>
    <property type="evidence" value="ECO:0000315"/>
    <property type="project" value="MGI"/>
</dbReference>
<dbReference type="FunFam" id="1.20.1440.160:FF:000001">
    <property type="entry name" value="Tumor necrosis factor alpha-induced protein 8-like 1"/>
    <property type="match status" value="1"/>
</dbReference>
<dbReference type="Gene3D" id="1.20.1440.160">
    <property type="entry name" value="Tumor necrosis factor alpha-induced protein 8-like"/>
    <property type="match status" value="1"/>
</dbReference>
<dbReference type="InterPro" id="IPR008477">
    <property type="entry name" value="TNFAIP8-like"/>
</dbReference>
<dbReference type="InterPro" id="IPR038355">
    <property type="entry name" value="TNFAIP8_sf"/>
</dbReference>
<dbReference type="PANTHER" id="PTHR12757:SF4">
    <property type="entry name" value="TUMOR NECROSIS FACTOR ALPHA-INDUCED PROTEIN 8-LIKE PROTEIN 2"/>
    <property type="match status" value="1"/>
</dbReference>
<dbReference type="PANTHER" id="PTHR12757">
    <property type="entry name" value="TUMOR NECROSIS FACTOR INDUCED PROTEIN"/>
    <property type="match status" value="1"/>
</dbReference>
<dbReference type="Pfam" id="PF05527">
    <property type="entry name" value="DUF758"/>
    <property type="match status" value="1"/>
</dbReference>
<comment type="function">
    <text evidence="2 3 4">Acts as a negative regulator of innate and adaptive immunity by maintaining immune homeostasis. Plays a regulatory role in the Toll-like signaling pathway by determining the strength of LPS-induced signaling and gene expression (PubMed:18455983). Inhibits TCR-mediated T-cell activation and negatively regulate T-cell function to prevent hyperresponsiveness (By similarity). Also inhibits autolysosome formation via negatively modulating MTOR activation by interacting with RAC1 and promoting the disassociation of the RAC1-MTOR complex (PubMed:34524845). Plays an essential role in NK-cell biology by acting as a checkpoint and displaying an expression pattern correlating with NK-cell maturation process and by negatively regulating NK-cell maturation and antitumor immunity (By similarity). Mechanistically, suppresses IL-15-triggered mTOR activity in NK-cells (PubMed:34524845).</text>
</comment>
<comment type="subunit">
    <text evidence="2">May interact with CASP8; however, such result is unclear since could not reproduce the interaction with CASP8. Interacts with RAC1.</text>
</comment>
<comment type="interaction">
    <interactant intactId="EBI-1781612">
        <id>Q9D8Y7</id>
    </interactant>
    <interactant intactId="EBI-851690">
        <id>O89110</id>
        <label>Casp8</label>
    </interactant>
    <organismsDiffer>false</organismsDiffer>
    <experiments>2</experiments>
</comment>
<comment type="subcellular location">
    <subcellularLocation>
        <location evidence="2">Cytoplasm</location>
    </subcellularLocation>
    <subcellularLocation>
        <location evidence="2">Nucleus</location>
    </subcellularLocation>
    <subcellularLocation>
        <location evidence="2">Lysosome</location>
    </subcellularLocation>
</comment>
<comment type="tissue specificity">
    <text evidence="3">Expressed in thymus, spleen, lymph node and small intestine, but not in liver, heart, muscle, testis, spinal cord or brain. Up-regulated in the spinal cord of mice with experimental autoimmune encephalomyelitis. Constitutively expressed by macrophages, B and T-lymphocytes at various developmental stages.</text>
</comment>
<comment type="induction">
    <text evidence="3">By TNF in fibroblasts.</text>
</comment>
<comment type="domain">
    <text evidence="1">The central region was initially thought to constitute a DED (death effector) domain. However, 3D-structure data reveal a previously uncharacterized fold that is different from the predicted fold of a DED (death effector) domain. It consists of a large, hydrophobic central cavity that is poised for cofactor binding (By similarity).</text>
</comment>
<comment type="PTM">
    <text evidence="2">Phosphorylated by TAK1/MAP3K7; this phosphorylation triggers association with BTRC and subsequent ubiquitination and degradation.</text>
</comment>
<comment type="PTM">
    <text evidence="2">Ubiquitinated in a BTRC-depdent manner; leading to degradation mediated through the proteasome pathway.</text>
</comment>
<comment type="disruption phenotype">
    <text evidence="3 4">When infected with lymphocytic choriomeningitis virus (LCMV), TIPE2-deficient mice exhibit significantly enhanced CD4(+) and CD8(+) T-cell immune responses compared with WT mice (PubMed:18455983). TIPE2-deficient NK-cells exhibit enhanced activation, cytotoxicity, and IFN-gamma production upon stimulation and enhanced response to IL-15 for maturation (PubMed:34524845).</text>
</comment>
<comment type="similarity">
    <text evidence="5">Belongs to the TNFAIP8 family. TNFAIP8L2 subfamily.</text>
</comment>
<evidence type="ECO:0000250" key="1"/>
<evidence type="ECO:0000250" key="2">
    <source>
        <dbReference type="UniProtKB" id="Q6P589"/>
    </source>
</evidence>
<evidence type="ECO:0000269" key="3">
    <source>
    </source>
</evidence>
<evidence type="ECO:0000269" key="4">
    <source>
    </source>
</evidence>
<evidence type="ECO:0000305" key="5"/>
<reference key="1">
    <citation type="journal article" date="2008" name="Cell">
        <title>TIPE2, a negative regulator of innate and adaptive immunity that maintains immune homeostasis.</title>
        <authorList>
            <person name="Sun H."/>
            <person name="Gong S."/>
            <person name="Carmody R.J."/>
            <person name="Hilliard A."/>
            <person name="Li L."/>
            <person name="Sun J."/>
            <person name="Kong L."/>
            <person name="Xu L."/>
            <person name="Hilliard B."/>
            <person name="Hu S."/>
            <person name="Shen H."/>
            <person name="Yang X."/>
            <person name="Chen Y.H."/>
        </authorList>
    </citation>
    <scope>NUCLEOTIDE SEQUENCE [MRNA]</scope>
    <scope>FUNCTION</scope>
    <scope>INTERACTION WITH CASP8</scope>
    <scope>INDUCTION</scope>
    <scope>TISSUE SPECIFICITY</scope>
    <scope>DISRUPTION PHENOTYPE</scope>
    <source>
        <strain>C57BL/6J</strain>
        <tissue>Spinal cord</tissue>
    </source>
</reference>
<reference key="2">
    <citation type="journal article" date="2005" name="Science">
        <title>The transcriptional landscape of the mammalian genome.</title>
        <authorList>
            <person name="Carninci P."/>
            <person name="Kasukawa T."/>
            <person name="Katayama S."/>
            <person name="Gough J."/>
            <person name="Frith M.C."/>
            <person name="Maeda N."/>
            <person name="Oyama R."/>
            <person name="Ravasi T."/>
            <person name="Lenhard B."/>
            <person name="Wells C."/>
            <person name="Kodzius R."/>
            <person name="Shimokawa K."/>
            <person name="Bajic V.B."/>
            <person name="Brenner S.E."/>
            <person name="Batalov S."/>
            <person name="Forrest A.R."/>
            <person name="Zavolan M."/>
            <person name="Davis M.J."/>
            <person name="Wilming L.G."/>
            <person name="Aidinis V."/>
            <person name="Allen J.E."/>
            <person name="Ambesi-Impiombato A."/>
            <person name="Apweiler R."/>
            <person name="Aturaliya R.N."/>
            <person name="Bailey T.L."/>
            <person name="Bansal M."/>
            <person name="Baxter L."/>
            <person name="Beisel K.W."/>
            <person name="Bersano T."/>
            <person name="Bono H."/>
            <person name="Chalk A.M."/>
            <person name="Chiu K.P."/>
            <person name="Choudhary V."/>
            <person name="Christoffels A."/>
            <person name="Clutterbuck D.R."/>
            <person name="Crowe M.L."/>
            <person name="Dalla E."/>
            <person name="Dalrymple B.P."/>
            <person name="de Bono B."/>
            <person name="Della Gatta G."/>
            <person name="di Bernardo D."/>
            <person name="Down T."/>
            <person name="Engstrom P."/>
            <person name="Fagiolini M."/>
            <person name="Faulkner G."/>
            <person name="Fletcher C.F."/>
            <person name="Fukushima T."/>
            <person name="Furuno M."/>
            <person name="Futaki S."/>
            <person name="Gariboldi M."/>
            <person name="Georgii-Hemming P."/>
            <person name="Gingeras T.R."/>
            <person name="Gojobori T."/>
            <person name="Green R.E."/>
            <person name="Gustincich S."/>
            <person name="Harbers M."/>
            <person name="Hayashi Y."/>
            <person name="Hensch T.K."/>
            <person name="Hirokawa N."/>
            <person name="Hill D."/>
            <person name="Huminiecki L."/>
            <person name="Iacono M."/>
            <person name="Ikeo K."/>
            <person name="Iwama A."/>
            <person name="Ishikawa T."/>
            <person name="Jakt M."/>
            <person name="Kanapin A."/>
            <person name="Katoh M."/>
            <person name="Kawasawa Y."/>
            <person name="Kelso J."/>
            <person name="Kitamura H."/>
            <person name="Kitano H."/>
            <person name="Kollias G."/>
            <person name="Krishnan S.P."/>
            <person name="Kruger A."/>
            <person name="Kummerfeld S.K."/>
            <person name="Kurochkin I.V."/>
            <person name="Lareau L.F."/>
            <person name="Lazarevic D."/>
            <person name="Lipovich L."/>
            <person name="Liu J."/>
            <person name="Liuni S."/>
            <person name="McWilliam S."/>
            <person name="Madan Babu M."/>
            <person name="Madera M."/>
            <person name="Marchionni L."/>
            <person name="Matsuda H."/>
            <person name="Matsuzawa S."/>
            <person name="Miki H."/>
            <person name="Mignone F."/>
            <person name="Miyake S."/>
            <person name="Morris K."/>
            <person name="Mottagui-Tabar S."/>
            <person name="Mulder N."/>
            <person name="Nakano N."/>
            <person name="Nakauchi H."/>
            <person name="Ng P."/>
            <person name="Nilsson R."/>
            <person name="Nishiguchi S."/>
            <person name="Nishikawa S."/>
            <person name="Nori F."/>
            <person name="Ohara O."/>
            <person name="Okazaki Y."/>
            <person name="Orlando V."/>
            <person name="Pang K.C."/>
            <person name="Pavan W.J."/>
            <person name="Pavesi G."/>
            <person name="Pesole G."/>
            <person name="Petrovsky N."/>
            <person name="Piazza S."/>
            <person name="Reed J."/>
            <person name="Reid J.F."/>
            <person name="Ring B.Z."/>
            <person name="Ringwald M."/>
            <person name="Rost B."/>
            <person name="Ruan Y."/>
            <person name="Salzberg S.L."/>
            <person name="Sandelin A."/>
            <person name="Schneider C."/>
            <person name="Schoenbach C."/>
            <person name="Sekiguchi K."/>
            <person name="Semple C.A."/>
            <person name="Seno S."/>
            <person name="Sessa L."/>
            <person name="Sheng Y."/>
            <person name="Shibata Y."/>
            <person name="Shimada H."/>
            <person name="Shimada K."/>
            <person name="Silva D."/>
            <person name="Sinclair B."/>
            <person name="Sperling S."/>
            <person name="Stupka E."/>
            <person name="Sugiura K."/>
            <person name="Sultana R."/>
            <person name="Takenaka Y."/>
            <person name="Taki K."/>
            <person name="Tammoja K."/>
            <person name="Tan S.L."/>
            <person name="Tang S."/>
            <person name="Taylor M.S."/>
            <person name="Tegner J."/>
            <person name="Teichmann S.A."/>
            <person name="Ueda H.R."/>
            <person name="van Nimwegen E."/>
            <person name="Verardo R."/>
            <person name="Wei C.L."/>
            <person name="Yagi K."/>
            <person name="Yamanishi H."/>
            <person name="Zabarovsky E."/>
            <person name="Zhu S."/>
            <person name="Zimmer A."/>
            <person name="Hide W."/>
            <person name="Bult C."/>
            <person name="Grimmond S.M."/>
            <person name="Teasdale R.D."/>
            <person name="Liu E.T."/>
            <person name="Brusic V."/>
            <person name="Quackenbush J."/>
            <person name="Wahlestedt C."/>
            <person name="Mattick J.S."/>
            <person name="Hume D.A."/>
            <person name="Kai C."/>
            <person name="Sasaki D."/>
            <person name="Tomaru Y."/>
            <person name="Fukuda S."/>
            <person name="Kanamori-Katayama M."/>
            <person name="Suzuki M."/>
            <person name="Aoki J."/>
            <person name="Arakawa T."/>
            <person name="Iida J."/>
            <person name="Imamura K."/>
            <person name="Itoh M."/>
            <person name="Kato T."/>
            <person name="Kawaji H."/>
            <person name="Kawagashira N."/>
            <person name="Kawashima T."/>
            <person name="Kojima M."/>
            <person name="Kondo S."/>
            <person name="Konno H."/>
            <person name="Nakano K."/>
            <person name="Ninomiya N."/>
            <person name="Nishio T."/>
            <person name="Okada M."/>
            <person name="Plessy C."/>
            <person name="Shibata K."/>
            <person name="Shiraki T."/>
            <person name="Suzuki S."/>
            <person name="Tagami M."/>
            <person name="Waki K."/>
            <person name="Watahiki A."/>
            <person name="Okamura-Oho Y."/>
            <person name="Suzuki H."/>
            <person name="Kawai J."/>
            <person name="Hayashizaki Y."/>
        </authorList>
    </citation>
    <scope>NUCLEOTIDE SEQUENCE [LARGE SCALE MRNA]</scope>
    <source>
        <strain>C57BL/6J</strain>
        <tissue>Pancreas</tissue>
    </source>
</reference>
<reference key="3">
    <citation type="journal article" date="2004" name="Genome Res.">
        <title>The status, quality, and expansion of the NIH full-length cDNA project: the Mammalian Gene Collection (MGC).</title>
        <authorList>
            <consortium name="The MGC Project Team"/>
        </authorList>
    </citation>
    <scope>NUCLEOTIDE SEQUENCE [LARGE SCALE MRNA]</scope>
    <source>
        <strain>C57BL/6J</strain>
        <tissue>Mammary tumor</tissue>
        <tissue>Thymus</tissue>
    </source>
</reference>
<reference key="4">
    <citation type="journal article" date="2010" name="Cell">
        <title>A tissue-specific atlas of mouse protein phosphorylation and expression.</title>
        <authorList>
            <person name="Huttlin E.L."/>
            <person name="Jedrychowski M.P."/>
            <person name="Elias J.E."/>
            <person name="Goswami T."/>
            <person name="Rad R."/>
            <person name="Beausoleil S.A."/>
            <person name="Villen J."/>
            <person name="Haas W."/>
            <person name="Sowa M.E."/>
            <person name="Gygi S.P."/>
        </authorList>
    </citation>
    <scope>IDENTIFICATION BY MASS SPECTROMETRY [LARGE SCALE ANALYSIS]</scope>
    <source>
        <tissue>Lung</tissue>
        <tissue>Spleen</tissue>
    </source>
</reference>
<reference key="5">
    <citation type="journal article" date="2021" name="Sci. Adv.">
        <title>TIPE2 is a checkpoint of natural killer cell maturation and antitumor immunity.</title>
        <authorList>
            <person name="Bi J."/>
            <person name="Cheng C."/>
            <person name="Zheng C."/>
            <person name="Huang C."/>
            <person name="Zheng X."/>
            <person name="Wan X."/>
            <person name="Chen Y.H."/>
            <person name="Tian Z."/>
            <person name="Sun H."/>
        </authorList>
    </citation>
    <scope>FUNCTION</scope>
    <scope>DISRUPTION PHENOTYPE</scope>
</reference>
<gene>
    <name type="primary">Tnfaip8l2</name>
</gene>
<accession>Q9D8Y7</accession>
<name>TP8L2_MOUSE</name>
<keyword id="KW-0963">Cytoplasm</keyword>
<keyword id="KW-0391">Immunity</keyword>
<keyword id="KW-0399">Innate immunity</keyword>
<keyword id="KW-0458">Lysosome</keyword>
<keyword id="KW-0539">Nucleus</keyword>
<keyword id="KW-0597">Phosphoprotein</keyword>
<keyword id="KW-1185">Reference proteome</keyword>
<keyword id="KW-0832">Ubl conjugation</keyword>
<proteinExistence type="evidence at protein level"/>